<reference key="1">
    <citation type="journal article" date="2005" name="Proc. Natl. Acad. Sci. U.S.A.">
        <title>Complete genome sequence of the probiotic lactic acid bacterium Lactobacillus acidophilus NCFM.</title>
        <authorList>
            <person name="Altermann E."/>
            <person name="Russell W.M."/>
            <person name="Azcarate-Peril M.A."/>
            <person name="Barrangou R."/>
            <person name="Buck B.L."/>
            <person name="McAuliffe O."/>
            <person name="Souther N."/>
            <person name="Dobson A."/>
            <person name="Duong T."/>
            <person name="Callanan M."/>
            <person name="Lick S."/>
            <person name="Hamrick A."/>
            <person name="Cano R."/>
            <person name="Klaenhammer T.R."/>
        </authorList>
    </citation>
    <scope>NUCLEOTIDE SEQUENCE [LARGE SCALE GENOMIC DNA]</scope>
    <source>
        <strain>ATCC 700396 / NCK56 / N2 / NCFM</strain>
    </source>
</reference>
<organism>
    <name type="scientific">Lactobacillus acidophilus (strain ATCC 700396 / NCK56 / N2 / NCFM)</name>
    <dbReference type="NCBI Taxonomy" id="272621"/>
    <lineage>
        <taxon>Bacteria</taxon>
        <taxon>Bacillati</taxon>
        <taxon>Bacillota</taxon>
        <taxon>Bacilli</taxon>
        <taxon>Lactobacillales</taxon>
        <taxon>Lactobacillaceae</taxon>
        <taxon>Lactobacillus</taxon>
    </lineage>
</organism>
<name>MSCL_LACAC</name>
<proteinExistence type="inferred from homology"/>
<sequence>MLTEFKQFIARGNVIDLAVGVIIGAAFTAIVQSLVKNLINPLIGIFVGKIDLSNLVFKAGDATFKYGSFINSVINFLIISFVVFLIVKAVNKITKKEEEEKPDTPTETDYLKEIRDLLKEKETK</sequence>
<dbReference type="EMBL" id="CP000033">
    <property type="protein sequence ID" value="AAV42314.1"/>
    <property type="molecule type" value="Genomic_DNA"/>
</dbReference>
<dbReference type="RefSeq" id="WP_011254148.1">
    <property type="nucleotide sequence ID" value="NC_006814.3"/>
</dbReference>
<dbReference type="RefSeq" id="YP_193345.1">
    <property type="nucleotide sequence ID" value="NC_006814.3"/>
</dbReference>
<dbReference type="SMR" id="Q5FLW0"/>
<dbReference type="STRING" id="272621.LBA0423"/>
<dbReference type="KEGG" id="lac:LBA0423"/>
<dbReference type="PATRIC" id="fig|272621.13.peg.408"/>
<dbReference type="eggNOG" id="COG1970">
    <property type="taxonomic scope" value="Bacteria"/>
</dbReference>
<dbReference type="HOGENOM" id="CLU_095787_0_0_9"/>
<dbReference type="OrthoDB" id="9810350at2"/>
<dbReference type="BioCyc" id="LACI272621:G1G49-417-MONOMER"/>
<dbReference type="Proteomes" id="UP000006381">
    <property type="component" value="Chromosome"/>
</dbReference>
<dbReference type="GO" id="GO:0005886">
    <property type="term" value="C:plasma membrane"/>
    <property type="evidence" value="ECO:0007669"/>
    <property type="project" value="UniProtKB-SubCell"/>
</dbReference>
<dbReference type="GO" id="GO:0008381">
    <property type="term" value="F:mechanosensitive monoatomic ion channel activity"/>
    <property type="evidence" value="ECO:0007669"/>
    <property type="project" value="UniProtKB-UniRule"/>
</dbReference>
<dbReference type="Gene3D" id="1.10.1200.120">
    <property type="entry name" value="Large-conductance mechanosensitive channel, MscL, domain 1"/>
    <property type="match status" value="1"/>
</dbReference>
<dbReference type="HAMAP" id="MF_00115">
    <property type="entry name" value="MscL"/>
    <property type="match status" value="1"/>
</dbReference>
<dbReference type="InterPro" id="IPR019823">
    <property type="entry name" value="Mechanosensitive_channel_CS"/>
</dbReference>
<dbReference type="InterPro" id="IPR001185">
    <property type="entry name" value="MS_channel"/>
</dbReference>
<dbReference type="InterPro" id="IPR037673">
    <property type="entry name" value="MSC/AndL"/>
</dbReference>
<dbReference type="InterPro" id="IPR036019">
    <property type="entry name" value="MscL_channel"/>
</dbReference>
<dbReference type="NCBIfam" id="TIGR00220">
    <property type="entry name" value="mscL"/>
    <property type="match status" value="1"/>
</dbReference>
<dbReference type="NCBIfam" id="NF001842">
    <property type="entry name" value="PRK00567.1-3"/>
    <property type="match status" value="1"/>
</dbReference>
<dbReference type="PANTHER" id="PTHR30266:SF2">
    <property type="entry name" value="LARGE-CONDUCTANCE MECHANOSENSITIVE CHANNEL"/>
    <property type="match status" value="1"/>
</dbReference>
<dbReference type="PANTHER" id="PTHR30266">
    <property type="entry name" value="MECHANOSENSITIVE CHANNEL MSCL"/>
    <property type="match status" value="1"/>
</dbReference>
<dbReference type="Pfam" id="PF01741">
    <property type="entry name" value="MscL"/>
    <property type="match status" value="1"/>
</dbReference>
<dbReference type="PRINTS" id="PR01264">
    <property type="entry name" value="MECHCHANNEL"/>
</dbReference>
<dbReference type="SUPFAM" id="SSF81330">
    <property type="entry name" value="Gated mechanosensitive channel"/>
    <property type="match status" value="1"/>
</dbReference>
<dbReference type="PROSITE" id="PS01327">
    <property type="entry name" value="MSCL"/>
    <property type="match status" value="1"/>
</dbReference>
<evidence type="ECO:0000255" key="1">
    <source>
        <dbReference type="HAMAP-Rule" id="MF_00115"/>
    </source>
</evidence>
<accession>Q5FLW0</accession>
<gene>
    <name evidence="1" type="primary">mscL</name>
    <name type="ordered locus">LBA0423</name>
</gene>
<comment type="function">
    <text evidence="1">Channel that opens in response to stretch forces in the membrane lipid bilayer. May participate in the regulation of osmotic pressure changes within the cell.</text>
</comment>
<comment type="subunit">
    <text evidence="1">Homopentamer.</text>
</comment>
<comment type="subcellular location">
    <subcellularLocation>
        <location evidence="1">Cell membrane</location>
        <topology evidence="1">Multi-pass membrane protein</topology>
    </subcellularLocation>
</comment>
<comment type="similarity">
    <text evidence="1">Belongs to the MscL family.</text>
</comment>
<keyword id="KW-1003">Cell membrane</keyword>
<keyword id="KW-0407">Ion channel</keyword>
<keyword id="KW-0406">Ion transport</keyword>
<keyword id="KW-0472">Membrane</keyword>
<keyword id="KW-1185">Reference proteome</keyword>
<keyword id="KW-0812">Transmembrane</keyword>
<keyword id="KW-1133">Transmembrane helix</keyword>
<keyword id="KW-0813">Transport</keyword>
<feature type="chain" id="PRO_0000238006" description="Large-conductance mechanosensitive channel">
    <location>
        <begin position="1"/>
        <end position="124"/>
    </location>
</feature>
<feature type="transmembrane region" description="Helical" evidence="1">
    <location>
        <begin position="14"/>
        <end position="34"/>
    </location>
</feature>
<feature type="transmembrane region" description="Helical" evidence="1">
    <location>
        <begin position="37"/>
        <end position="57"/>
    </location>
</feature>
<feature type="transmembrane region" description="Helical" evidence="1">
    <location>
        <begin position="67"/>
        <end position="87"/>
    </location>
</feature>
<protein>
    <recommendedName>
        <fullName evidence="1">Large-conductance mechanosensitive channel</fullName>
    </recommendedName>
</protein>